<keyword id="KW-1185">Reference proteome</keyword>
<keyword id="KW-0677">Repeat</keyword>
<keyword id="KW-0964">Secreted</keyword>
<keyword id="KW-0732">Signal</keyword>
<keyword id="KW-0843">Virulence</keyword>
<protein>
    <recommendedName>
        <fullName>Staphylococcal secretory antigen SsaA</fullName>
    </recommendedName>
</protein>
<comment type="function">
    <text evidence="1">Not known; immunogenic protein.</text>
</comment>
<comment type="subcellular location">
    <subcellularLocation>
        <location evidence="1">Secreted</location>
    </subcellularLocation>
</comment>
<comment type="induction">
    <text>Activated by two-component regulatory system YycG/YycF.</text>
</comment>
<name>SSAA_STAA8</name>
<gene>
    <name type="primary">ssaA</name>
    <name type="ordered locus">SAOUHSC_02883</name>
</gene>
<organism>
    <name type="scientific">Staphylococcus aureus (strain NCTC 8325 / PS 47)</name>
    <dbReference type="NCBI Taxonomy" id="93061"/>
    <lineage>
        <taxon>Bacteria</taxon>
        <taxon>Bacillati</taxon>
        <taxon>Bacillota</taxon>
        <taxon>Bacilli</taxon>
        <taxon>Bacillales</taxon>
        <taxon>Staphylococcaceae</taxon>
        <taxon>Staphylococcus</taxon>
    </lineage>
</organism>
<evidence type="ECO:0000250" key="1"/>
<evidence type="ECO:0000255" key="2"/>
<evidence type="ECO:0000255" key="3">
    <source>
        <dbReference type="PROSITE-ProRule" id="PRU00048"/>
    </source>
</evidence>
<dbReference type="EMBL" id="CP000253">
    <property type="protein sequence ID" value="ABD31880.1"/>
    <property type="molecule type" value="Genomic_DNA"/>
</dbReference>
<dbReference type="RefSeq" id="WP_000725225.1">
    <property type="nucleotide sequence ID" value="NZ_LS483365.1"/>
</dbReference>
<dbReference type="RefSeq" id="YP_501337.1">
    <property type="nucleotide sequence ID" value="NC_007795.1"/>
</dbReference>
<dbReference type="SMR" id="Q2FV55"/>
<dbReference type="STRING" id="93061.SAOUHSC_02883"/>
<dbReference type="PaxDb" id="1280-SAXN108_2817"/>
<dbReference type="GeneID" id="3921553"/>
<dbReference type="KEGG" id="sao:SAOUHSC_02883"/>
<dbReference type="PATRIC" id="fig|93061.5.peg.2606"/>
<dbReference type="eggNOG" id="COG3942">
    <property type="taxonomic scope" value="Bacteria"/>
</dbReference>
<dbReference type="HOGENOM" id="CLU_016043_11_0_9"/>
<dbReference type="OrthoDB" id="2389353at2"/>
<dbReference type="PRO" id="PR:Q2FV55"/>
<dbReference type="Proteomes" id="UP000008816">
    <property type="component" value="Chromosome"/>
</dbReference>
<dbReference type="GO" id="GO:0005576">
    <property type="term" value="C:extracellular region"/>
    <property type="evidence" value="ECO:0007669"/>
    <property type="project" value="UniProtKB-SubCell"/>
</dbReference>
<dbReference type="Gene3D" id="3.90.1720.10">
    <property type="entry name" value="endopeptidase domain like (from Nostoc punctiforme)"/>
    <property type="match status" value="1"/>
</dbReference>
<dbReference type="InterPro" id="IPR007921">
    <property type="entry name" value="CHAP_dom"/>
</dbReference>
<dbReference type="InterPro" id="IPR038765">
    <property type="entry name" value="Papain-like_cys_pep_sf"/>
</dbReference>
<dbReference type="Pfam" id="PF05257">
    <property type="entry name" value="CHAP"/>
    <property type="match status" value="1"/>
</dbReference>
<dbReference type="SUPFAM" id="SSF54001">
    <property type="entry name" value="Cysteine proteinases"/>
    <property type="match status" value="1"/>
</dbReference>
<dbReference type="PROSITE" id="PS50911">
    <property type="entry name" value="CHAP"/>
    <property type="match status" value="1"/>
</dbReference>
<feature type="signal peptide" evidence="2">
    <location>
        <begin position="1"/>
        <end position="26"/>
    </location>
</feature>
<feature type="chain" id="PRO_0000247965" description="Staphylococcal secretory antigen SsaA">
    <location>
        <begin position="27"/>
        <end position="255"/>
    </location>
</feature>
<feature type="repeat" description="1">
    <location>
        <begin position="75"/>
        <end position="78"/>
    </location>
</feature>
<feature type="repeat" description="2">
    <location>
        <begin position="88"/>
        <end position="91"/>
    </location>
</feature>
<feature type="repeat" description="3">
    <location>
        <begin position="98"/>
        <end position="101"/>
    </location>
</feature>
<feature type="domain" description="Peptidase C51" evidence="3">
    <location>
        <begin position="134"/>
        <end position="255"/>
    </location>
</feature>
<feature type="region of interest" description="3 X 4 AA repeats of Y-N-N-Y">
    <location>
        <begin position="75"/>
        <end position="101"/>
    </location>
</feature>
<proteinExistence type="evidence at transcript level"/>
<accession>Q2FV55</accession>
<sequence>MKKIVTATIATAGLATIAFAGHDAQAAEQNNNGYNSNDAQSYSYTYTIDAQGNYHYTWTGNWNPSQLTQNNTYYYNNYNTYSYNNASYNNYYNHSYQYNNYTNNSQTATNNYYTGGSGASYSTTSNNVHVTTTAAPSSNGRSISNGYASGSNLYTSGQCTYYVFDRVGGKIGSTWGNASNWANAAASSGYTVNNTPKVGAIMQTTQGYYGHVAYVEGVNSNGSVRVSEMNYGHGAGVVTSRTISANQAGSYNFIH</sequence>
<reference key="1">
    <citation type="book" date="2006" name="Gram positive pathogens, 2nd edition">
        <title>The Staphylococcus aureus NCTC 8325 genome.</title>
        <editorList>
            <person name="Fischetti V."/>
            <person name="Novick R."/>
            <person name="Ferretti J."/>
            <person name="Portnoy D."/>
            <person name="Rood J."/>
        </editorList>
        <authorList>
            <person name="Gillaspy A.F."/>
            <person name="Worrell V."/>
            <person name="Orvis J."/>
            <person name="Roe B.A."/>
            <person name="Dyer D.W."/>
            <person name="Iandolo J.J."/>
        </authorList>
    </citation>
    <scope>NUCLEOTIDE SEQUENCE [LARGE SCALE GENOMIC DNA]</scope>
    <source>
        <strain>NCTC 8325 / PS 47</strain>
    </source>
</reference>
<reference key="2">
    <citation type="journal article" date="2004" name="J. Bacteriol.">
        <title>Identification of genes controlled by the essential YycG/YycF two-component system of Staphylococcus aureus.</title>
        <authorList>
            <person name="Dubrac S."/>
            <person name="Msadek T."/>
        </authorList>
    </citation>
    <scope>REGULATION BY YYCG/YYCF</scope>
</reference>